<dbReference type="EC" id="2.1.1.182" evidence="1"/>
<dbReference type="EMBL" id="CP000825">
    <property type="protein sequence ID" value="ABV50572.1"/>
    <property type="molecule type" value="Genomic_DNA"/>
</dbReference>
<dbReference type="RefSeq" id="WP_012007663.1">
    <property type="nucleotide sequence ID" value="NC_009840.1"/>
</dbReference>
<dbReference type="SMR" id="A8G4P1"/>
<dbReference type="STRING" id="93060.P9215_09571"/>
<dbReference type="KEGG" id="pmh:P9215_09571"/>
<dbReference type="eggNOG" id="COG0030">
    <property type="taxonomic scope" value="Bacteria"/>
</dbReference>
<dbReference type="HOGENOM" id="CLU_041220_0_1_3"/>
<dbReference type="OrthoDB" id="9814755at2"/>
<dbReference type="Proteomes" id="UP000002014">
    <property type="component" value="Chromosome"/>
</dbReference>
<dbReference type="GO" id="GO:0005829">
    <property type="term" value="C:cytosol"/>
    <property type="evidence" value="ECO:0007669"/>
    <property type="project" value="TreeGrafter"/>
</dbReference>
<dbReference type="GO" id="GO:0052908">
    <property type="term" value="F:16S rRNA (adenine(1518)-N(6)/adenine(1519)-N(6))-dimethyltransferase activity"/>
    <property type="evidence" value="ECO:0007669"/>
    <property type="project" value="UniProtKB-EC"/>
</dbReference>
<dbReference type="GO" id="GO:0003723">
    <property type="term" value="F:RNA binding"/>
    <property type="evidence" value="ECO:0007669"/>
    <property type="project" value="UniProtKB-KW"/>
</dbReference>
<dbReference type="CDD" id="cd02440">
    <property type="entry name" value="AdoMet_MTases"/>
    <property type="match status" value="1"/>
</dbReference>
<dbReference type="Gene3D" id="1.10.8.100">
    <property type="entry name" value="Ribosomal RNA adenine dimethylase-like, domain 2"/>
    <property type="match status" value="1"/>
</dbReference>
<dbReference type="Gene3D" id="3.40.50.150">
    <property type="entry name" value="Vaccinia Virus protein VP39"/>
    <property type="match status" value="1"/>
</dbReference>
<dbReference type="HAMAP" id="MF_00607">
    <property type="entry name" value="16SrRNA_methyltr_A"/>
    <property type="match status" value="1"/>
</dbReference>
<dbReference type="InterPro" id="IPR001737">
    <property type="entry name" value="KsgA/Erm"/>
</dbReference>
<dbReference type="InterPro" id="IPR023165">
    <property type="entry name" value="rRNA_Ade_diMease-like_C"/>
</dbReference>
<dbReference type="InterPro" id="IPR020596">
    <property type="entry name" value="rRNA_Ade_Mease_Trfase_CS"/>
</dbReference>
<dbReference type="InterPro" id="IPR020598">
    <property type="entry name" value="rRNA_Ade_methylase_Trfase_N"/>
</dbReference>
<dbReference type="InterPro" id="IPR011530">
    <property type="entry name" value="rRNA_adenine_dimethylase"/>
</dbReference>
<dbReference type="InterPro" id="IPR029063">
    <property type="entry name" value="SAM-dependent_MTases_sf"/>
</dbReference>
<dbReference type="NCBIfam" id="TIGR00755">
    <property type="entry name" value="ksgA"/>
    <property type="match status" value="1"/>
</dbReference>
<dbReference type="PANTHER" id="PTHR11727">
    <property type="entry name" value="DIMETHYLADENOSINE TRANSFERASE"/>
    <property type="match status" value="1"/>
</dbReference>
<dbReference type="PANTHER" id="PTHR11727:SF7">
    <property type="entry name" value="DIMETHYLADENOSINE TRANSFERASE-RELATED"/>
    <property type="match status" value="1"/>
</dbReference>
<dbReference type="Pfam" id="PF00398">
    <property type="entry name" value="RrnaAD"/>
    <property type="match status" value="1"/>
</dbReference>
<dbReference type="SMART" id="SM00650">
    <property type="entry name" value="rADc"/>
    <property type="match status" value="1"/>
</dbReference>
<dbReference type="SUPFAM" id="SSF53335">
    <property type="entry name" value="S-adenosyl-L-methionine-dependent methyltransferases"/>
    <property type="match status" value="1"/>
</dbReference>
<dbReference type="PROSITE" id="PS01131">
    <property type="entry name" value="RRNA_A_DIMETH"/>
    <property type="match status" value="1"/>
</dbReference>
<dbReference type="PROSITE" id="PS51689">
    <property type="entry name" value="SAM_RNA_A_N6_MT"/>
    <property type="match status" value="1"/>
</dbReference>
<accession>A8G4P1</accession>
<reference key="1">
    <citation type="journal article" date="2007" name="PLoS Genet.">
        <title>Patterns and implications of gene gain and loss in the evolution of Prochlorococcus.</title>
        <authorList>
            <person name="Kettler G.C."/>
            <person name="Martiny A.C."/>
            <person name="Huang K."/>
            <person name="Zucker J."/>
            <person name="Coleman M.L."/>
            <person name="Rodrigue S."/>
            <person name="Chen F."/>
            <person name="Lapidus A."/>
            <person name="Ferriera S."/>
            <person name="Johnson J."/>
            <person name="Steglich C."/>
            <person name="Church G.M."/>
            <person name="Richardson P."/>
            <person name="Chisholm S.W."/>
        </authorList>
    </citation>
    <scope>NUCLEOTIDE SEQUENCE [LARGE SCALE GENOMIC DNA]</scope>
    <source>
        <strain>MIT 9215</strain>
    </source>
</reference>
<feature type="chain" id="PRO_1000061286" description="Ribosomal RNA small subunit methyltransferase A">
    <location>
        <begin position="1"/>
        <end position="274"/>
    </location>
</feature>
<feature type="binding site" evidence="1">
    <location>
        <position position="15"/>
    </location>
    <ligand>
        <name>S-adenosyl-L-methionine</name>
        <dbReference type="ChEBI" id="CHEBI:59789"/>
    </ligand>
</feature>
<feature type="binding site" evidence="1">
    <location>
        <position position="17"/>
    </location>
    <ligand>
        <name>S-adenosyl-L-methionine</name>
        <dbReference type="ChEBI" id="CHEBI:59789"/>
    </ligand>
</feature>
<feature type="binding site" evidence="1">
    <location>
        <position position="42"/>
    </location>
    <ligand>
        <name>S-adenosyl-L-methionine</name>
        <dbReference type="ChEBI" id="CHEBI:59789"/>
    </ligand>
</feature>
<feature type="binding site" evidence="1">
    <location>
        <position position="64"/>
    </location>
    <ligand>
        <name>S-adenosyl-L-methionine</name>
        <dbReference type="ChEBI" id="CHEBI:59789"/>
    </ligand>
</feature>
<feature type="binding site" evidence="1">
    <location>
        <position position="89"/>
    </location>
    <ligand>
        <name>S-adenosyl-L-methionine</name>
        <dbReference type="ChEBI" id="CHEBI:59789"/>
    </ligand>
</feature>
<feature type="binding site" evidence="1">
    <location>
        <position position="108"/>
    </location>
    <ligand>
        <name>S-adenosyl-L-methionine</name>
        <dbReference type="ChEBI" id="CHEBI:59789"/>
    </ligand>
</feature>
<name>RSMA_PROM2</name>
<gene>
    <name evidence="1" type="primary">rsmA</name>
    <name evidence="1" type="synonym">ksgA</name>
    <name type="ordered locus">P9215_09571</name>
</gene>
<organism>
    <name type="scientific">Prochlorococcus marinus (strain MIT 9215)</name>
    <dbReference type="NCBI Taxonomy" id="93060"/>
    <lineage>
        <taxon>Bacteria</taxon>
        <taxon>Bacillati</taxon>
        <taxon>Cyanobacteriota</taxon>
        <taxon>Cyanophyceae</taxon>
        <taxon>Synechococcales</taxon>
        <taxon>Prochlorococcaceae</taxon>
        <taxon>Prochlorococcus</taxon>
    </lineage>
</organism>
<evidence type="ECO:0000255" key="1">
    <source>
        <dbReference type="HAMAP-Rule" id="MF_00607"/>
    </source>
</evidence>
<protein>
    <recommendedName>
        <fullName evidence="1">Ribosomal RNA small subunit methyltransferase A</fullName>
        <ecNumber evidence="1">2.1.1.182</ecNumber>
    </recommendedName>
    <alternativeName>
        <fullName evidence="1">16S rRNA (adenine(1518)-N(6)/adenine(1519)-N(6))-dimethyltransferase</fullName>
    </alternativeName>
    <alternativeName>
        <fullName evidence="1">16S rRNA dimethyladenosine transferase</fullName>
    </alternativeName>
    <alternativeName>
        <fullName evidence="1">16S rRNA dimethylase</fullName>
    </alternativeName>
    <alternativeName>
        <fullName evidence="1">S-adenosylmethionine-6-N', N'-adenosyl(rRNA) dimethyltransferase</fullName>
    </alternativeName>
</protein>
<keyword id="KW-0963">Cytoplasm</keyword>
<keyword id="KW-0489">Methyltransferase</keyword>
<keyword id="KW-0694">RNA-binding</keyword>
<keyword id="KW-0698">rRNA processing</keyword>
<keyword id="KW-0949">S-adenosyl-L-methionine</keyword>
<keyword id="KW-0808">Transferase</keyword>
<comment type="function">
    <text evidence="1">Specifically dimethylates two adjacent adenosines (A1518 and A1519) in the loop of a conserved hairpin near the 3'-end of 16S rRNA in the 30S particle. May play a critical role in biogenesis of 30S subunits.</text>
</comment>
<comment type="catalytic activity">
    <reaction evidence="1">
        <text>adenosine(1518)/adenosine(1519) in 16S rRNA + 4 S-adenosyl-L-methionine = N(6)-dimethyladenosine(1518)/N(6)-dimethyladenosine(1519) in 16S rRNA + 4 S-adenosyl-L-homocysteine + 4 H(+)</text>
        <dbReference type="Rhea" id="RHEA:19609"/>
        <dbReference type="Rhea" id="RHEA-COMP:10232"/>
        <dbReference type="Rhea" id="RHEA-COMP:10233"/>
        <dbReference type="ChEBI" id="CHEBI:15378"/>
        <dbReference type="ChEBI" id="CHEBI:57856"/>
        <dbReference type="ChEBI" id="CHEBI:59789"/>
        <dbReference type="ChEBI" id="CHEBI:74411"/>
        <dbReference type="ChEBI" id="CHEBI:74493"/>
        <dbReference type="EC" id="2.1.1.182"/>
    </reaction>
</comment>
<comment type="subcellular location">
    <subcellularLocation>
        <location evidence="1">Cytoplasm</location>
    </subcellularLocation>
</comment>
<comment type="similarity">
    <text evidence="1">Belongs to the class I-like SAM-binding methyltransferase superfamily. rRNA adenine N(6)-methyltransferase family. RsmA subfamily.</text>
</comment>
<sequence>MNSKNYHQKKRFGQHWLVNKKILEKIKEIAVLNENDFILEIGPGKGALTAKLLDSKIKKLHAVELDNDLINLLNDKFNNNDKFSLQHGDILSVNLDSINKKITKVIANIPYNITGPILDIFIGRLGIIRNCNYEKIIFLMQKDVVDRILSKEGSPNAGALSIRMQLLSKIKKICDVPPSSFSPPPKVFSSLVVFEPINDNLRLDISLEKYIDKLLRISFNSRRKMLRNTLNSILSNEEMNELSESSKVCFKLRPQDISINQWIKLAENCIKIKK</sequence>
<proteinExistence type="inferred from homology"/>